<evidence type="ECO:0000250" key="1"/>
<evidence type="ECO:0000250" key="2">
    <source>
        <dbReference type="UniProtKB" id="P20797"/>
    </source>
</evidence>
<evidence type="ECO:0000250" key="3">
    <source>
        <dbReference type="UniProtKB" id="Q8WP90"/>
    </source>
</evidence>
<evidence type="ECO:0000255" key="4"/>
<evidence type="ECO:0000305" key="5"/>
<evidence type="ECO:0000312" key="6">
    <source>
        <dbReference type="EMBL" id="AAW80691.1"/>
    </source>
</evidence>
<evidence type="ECO:0000312" key="7">
    <source>
        <dbReference type="EMBL" id="ABX25611.1"/>
    </source>
</evidence>
<evidence type="ECO:0000312" key="8">
    <source>
        <dbReference type="EMBL" id="ABX25612.1"/>
    </source>
</evidence>
<comment type="function">
    <text evidence="3">Colony queen number, a major feature of social organization, is associated with worker genotype for Gp-9. Colonies are headed by either a single reproductive queen (monogyne form) or multiple queens (polygyne form). Differences in worker Gp-9 genotypes between social forms may cause differences in workers' abilities to recognize queens and regulate their numbers (By similarity).</text>
</comment>
<comment type="subunit">
    <text evidence="2">Homodimer.</text>
</comment>
<comment type="subcellular location">
    <subcellularLocation>
        <location evidence="1">Secreted</location>
    </subcellularLocation>
</comment>
<comment type="polymorphism">
    <text evidence="2">Allele B is shown, monogyne population from Brazil.</text>
</comment>
<comment type="similarity">
    <text evidence="4">Belongs to the PBP/GOBP family.</text>
</comment>
<accession>Q5EP07</accession>
<accession>A9LKD3</accession>
<reference evidence="5 6" key="1">
    <citation type="journal article" date="2005" name="Mol. Biol. Evol.">
        <title>Molecular evolutionary analyses of the odorant-binding protein gene Gp-9 in fire ants and other Solenopsis species.</title>
        <authorList>
            <person name="Krieger M.J.B."/>
            <person name="Ross K.G."/>
        </authorList>
    </citation>
    <scope>NUCLEOTIDE SEQUENCE [GENOMIC DNA] (ALLELE B)</scope>
</reference>
<reference evidence="5 7" key="2">
    <citation type="journal article" date="2007" name="PLoS ONE">
        <title>Molecular variation at a candidate gene implicated in the regulation of fire ant social behavior.</title>
        <authorList>
            <person name="Gotzek D."/>
            <person name="Shoemaker D.D."/>
            <person name="Ross K.G."/>
        </authorList>
    </citation>
    <scope>NUCLEOTIDE SEQUENCE [GENOMIC DNA] OF 5-153</scope>
    <source>
        <strain evidence="7">Pi-62</strain>
        <strain evidence="8">Pi-66c</strain>
    </source>
</reference>
<protein>
    <recommendedName>
        <fullName>Pheromone-binding protein Gp-9</fullName>
        <shortName>PBP</shortName>
    </recommendedName>
    <alternativeName>
        <fullName>Putative odorant-binding protein Gp-9</fullName>
    </alternativeName>
</protein>
<name>PBGP9_SOLPU</name>
<feature type="signal peptide" evidence="3">
    <location>
        <begin position="1"/>
        <end position="19"/>
    </location>
</feature>
<feature type="chain" id="PRO_5000094268" description="Pheromone-binding protein Gp-9" evidence="3">
    <location>
        <begin position="20"/>
        <end position="153"/>
    </location>
</feature>
<feature type="disulfide bond" evidence="2">
    <location>
        <begin position="37"/>
        <end position="77"/>
    </location>
</feature>
<feature type="disulfide bond" evidence="2">
    <location>
        <begin position="73"/>
        <end position="129"/>
    </location>
</feature>
<feature type="disulfide bond" evidence="2">
    <location>
        <begin position="118"/>
        <end position="138"/>
    </location>
</feature>
<dbReference type="EMBL" id="AY818624">
    <property type="protein sequence ID" value="AAW80691.1"/>
    <property type="molecule type" value="Genomic_DNA"/>
</dbReference>
<dbReference type="EMBL" id="EU220032">
    <property type="protein sequence ID" value="ABX25611.1"/>
    <property type="molecule type" value="Genomic_DNA"/>
</dbReference>
<dbReference type="EMBL" id="EU220033">
    <property type="protein sequence ID" value="ABX25612.1"/>
    <property type="molecule type" value="Genomic_DNA"/>
</dbReference>
<dbReference type="SMR" id="Q5EP07"/>
<dbReference type="GO" id="GO:0005615">
    <property type="term" value="C:extracellular space"/>
    <property type="evidence" value="ECO:0000250"/>
    <property type="project" value="UniProtKB"/>
</dbReference>
<dbReference type="GO" id="GO:0005550">
    <property type="term" value="F:pheromone binding"/>
    <property type="evidence" value="ECO:0007669"/>
    <property type="project" value="UniProtKB-KW"/>
</dbReference>
<dbReference type="GO" id="GO:0019236">
    <property type="term" value="P:response to pheromone"/>
    <property type="evidence" value="ECO:0007669"/>
    <property type="project" value="UniProtKB-KW"/>
</dbReference>
<dbReference type="GO" id="GO:0035176">
    <property type="term" value="P:social behavior"/>
    <property type="evidence" value="ECO:0000250"/>
    <property type="project" value="UniProtKB"/>
</dbReference>
<dbReference type="CDD" id="cd23992">
    <property type="entry name" value="PBP_GOBP"/>
    <property type="match status" value="1"/>
</dbReference>
<dbReference type="FunFam" id="1.10.238.20:FF:000004">
    <property type="entry name" value="Pheromone-binding protein Gp-9"/>
    <property type="match status" value="1"/>
</dbReference>
<dbReference type="Gene3D" id="1.10.238.20">
    <property type="entry name" value="Pheromone/general odorant binding protein domain"/>
    <property type="match status" value="1"/>
</dbReference>
<dbReference type="InterPro" id="IPR006170">
    <property type="entry name" value="PBP/GOBP"/>
</dbReference>
<dbReference type="InterPro" id="IPR036728">
    <property type="entry name" value="PBP_GOBP_sf"/>
</dbReference>
<dbReference type="InterPro" id="IPR022354">
    <property type="entry name" value="Pheromone-bd_protein_Gp-9"/>
</dbReference>
<dbReference type="Pfam" id="PF01395">
    <property type="entry name" value="PBP_GOBP"/>
    <property type="match status" value="1"/>
</dbReference>
<dbReference type="PRINTS" id="PR02007">
    <property type="entry name" value="ODORANTBPGP9"/>
</dbReference>
<dbReference type="SUPFAM" id="SSF47565">
    <property type="entry name" value="Insect pheromone/odorant-binding proteins"/>
    <property type="match status" value="1"/>
</dbReference>
<proteinExistence type="inferred from homology"/>
<keyword id="KW-0085">Behavior</keyword>
<keyword id="KW-1015">Disulfide bond</keyword>
<keyword id="KW-0589">Pheromone response</keyword>
<keyword id="KW-0590">Pheromone-binding</keyword>
<keyword id="KW-0964">Secreted</keyword>
<keyword id="KW-0732">Signal</keyword>
<keyword id="KW-0813">Transport</keyword>
<organism>
    <name type="scientific">Solenopsis pusillignis</name>
    <name type="common">Fire ant</name>
    <dbReference type="NCBI Taxonomy" id="310436"/>
    <lineage>
        <taxon>Eukaryota</taxon>
        <taxon>Metazoa</taxon>
        <taxon>Ecdysozoa</taxon>
        <taxon>Arthropoda</taxon>
        <taxon>Hexapoda</taxon>
        <taxon>Insecta</taxon>
        <taxon>Pterygota</taxon>
        <taxon>Neoptera</taxon>
        <taxon>Endopterygota</taxon>
        <taxon>Hymenoptera</taxon>
        <taxon>Apocrita</taxon>
        <taxon>Aculeata</taxon>
        <taxon>Formicoidea</taxon>
        <taxon>Formicidae</taxon>
        <taxon>Myrmicinae</taxon>
        <taxon>Solenopsis</taxon>
    </lineage>
</organism>
<sequence length="153" mass="16866">MKTFVLHIFIFALVAFASASRDSAKKIGSQYDNFETCLTEHGLTEDDVFSIGEVSSGQHKTNHEDTELHKNGCVMQCMLEKDGLMSGADYDEEKMREDYIKETGAQPGDQRIEALNACMQETKDMEDKCDKSLILVACVLAAEAILADSSEAA</sequence>
<gene>
    <name evidence="6" type="primary">Gp-9</name>
</gene>